<dbReference type="EC" id="2.3.2.6" evidence="1"/>
<dbReference type="EMBL" id="CP000949">
    <property type="protein sequence ID" value="ACA73893.1"/>
    <property type="molecule type" value="Genomic_DNA"/>
</dbReference>
<dbReference type="SMR" id="B1JBE5"/>
<dbReference type="STRING" id="390235.PputW619_3409"/>
<dbReference type="KEGG" id="ppw:PputW619_3409"/>
<dbReference type="eggNOG" id="COG2360">
    <property type="taxonomic scope" value="Bacteria"/>
</dbReference>
<dbReference type="HOGENOM" id="CLU_075045_0_0_6"/>
<dbReference type="OrthoDB" id="9790282at2"/>
<dbReference type="GO" id="GO:0005737">
    <property type="term" value="C:cytoplasm"/>
    <property type="evidence" value="ECO:0007669"/>
    <property type="project" value="UniProtKB-SubCell"/>
</dbReference>
<dbReference type="GO" id="GO:0008914">
    <property type="term" value="F:leucyl-tRNA--protein transferase activity"/>
    <property type="evidence" value="ECO:0007669"/>
    <property type="project" value="UniProtKB-UniRule"/>
</dbReference>
<dbReference type="GO" id="GO:0030163">
    <property type="term" value="P:protein catabolic process"/>
    <property type="evidence" value="ECO:0007669"/>
    <property type="project" value="UniProtKB-UniRule"/>
</dbReference>
<dbReference type="FunFam" id="3.30.70.3550:FF:000001">
    <property type="entry name" value="Leucyl/phenylalanyl-tRNA--protein transferase"/>
    <property type="match status" value="1"/>
</dbReference>
<dbReference type="FunFam" id="3.40.630.70:FF:000001">
    <property type="entry name" value="Leucyl/phenylalanyl-tRNA--protein transferase"/>
    <property type="match status" value="1"/>
</dbReference>
<dbReference type="Gene3D" id="3.40.630.70">
    <property type="entry name" value="Leucyl/phenylalanyl-tRNA-protein transferase, C-terminal domain"/>
    <property type="match status" value="1"/>
</dbReference>
<dbReference type="Gene3D" id="3.30.70.3550">
    <property type="entry name" value="Leucyl/phenylalanyl-tRNA-protein transferase, N-terminal domain"/>
    <property type="match status" value="1"/>
</dbReference>
<dbReference type="HAMAP" id="MF_00688">
    <property type="entry name" value="Leu_Phe_trans"/>
    <property type="match status" value="1"/>
</dbReference>
<dbReference type="InterPro" id="IPR016181">
    <property type="entry name" value="Acyl_CoA_acyltransferase"/>
</dbReference>
<dbReference type="InterPro" id="IPR004616">
    <property type="entry name" value="Leu/Phe-tRNA_Trfase"/>
</dbReference>
<dbReference type="InterPro" id="IPR042203">
    <property type="entry name" value="Leu/Phe-tRNA_Trfase_C"/>
</dbReference>
<dbReference type="InterPro" id="IPR042221">
    <property type="entry name" value="Leu/Phe-tRNA_Trfase_N"/>
</dbReference>
<dbReference type="NCBIfam" id="TIGR00667">
    <property type="entry name" value="aat"/>
    <property type="match status" value="1"/>
</dbReference>
<dbReference type="PANTHER" id="PTHR30098">
    <property type="entry name" value="LEUCYL/PHENYLALANYL-TRNA--PROTEIN TRANSFERASE"/>
    <property type="match status" value="1"/>
</dbReference>
<dbReference type="PANTHER" id="PTHR30098:SF2">
    <property type="entry name" value="LEUCYL_PHENYLALANYL-TRNA--PROTEIN TRANSFERASE"/>
    <property type="match status" value="1"/>
</dbReference>
<dbReference type="Pfam" id="PF03588">
    <property type="entry name" value="Leu_Phe_trans"/>
    <property type="match status" value="1"/>
</dbReference>
<dbReference type="SUPFAM" id="SSF55729">
    <property type="entry name" value="Acyl-CoA N-acyltransferases (Nat)"/>
    <property type="match status" value="1"/>
</dbReference>
<comment type="function">
    <text evidence="1">Functions in the N-end rule pathway of protein degradation where it conjugates Leu, Phe and, less efficiently, Met from aminoacyl-tRNAs to the N-termini of proteins containing an N-terminal arginine or lysine.</text>
</comment>
<comment type="catalytic activity">
    <reaction evidence="1">
        <text>N-terminal L-lysyl-[protein] + L-leucyl-tRNA(Leu) = N-terminal L-leucyl-L-lysyl-[protein] + tRNA(Leu) + H(+)</text>
        <dbReference type="Rhea" id="RHEA:12340"/>
        <dbReference type="Rhea" id="RHEA-COMP:9613"/>
        <dbReference type="Rhea" id="RHEA-COMP:9622"/>
        <dbReference type="Rhea" id="RHEA-COMP:12670"/>
        <dbReference type="Rhea" id="RHEA-COMP:12671"/>
        <dbReference type="ChEBI" id="CHEBI:15378"/>
        <dbReference type="ChEBI" id="CHEBI:65249"/>
        <dbReference type="ChEBI" id="CHEBI:78442"/>
        <dbReference type="ChEBI" id="CHEBI:78494"/>
        <dbReference type="ChEBI" id="CHEBI:133043"/>
        <dbReference type="EC" id="2.3.2.6"/>
    </reaction>
</comment>
<comment type="catalytic activity">
    <reaction evidence="1">
        <text>N-terminal L-arginyl-[protein] + L-leucyl-tRNA(Leu) = N-terminal L-leucyl-L-arginyl-[protein] + tRNA(Leu) + H(+)</text>
        <dbReference type="Rhea" id="RHEA:50416"/>
        <dbReference type="Rhea" id="RHEA-COMP:9613"/>
        <dbReference type="Rhea" id="RHEA-COMP:9622"/>
        <dbReference type="Rhea" id="RHEA-COMP:12672"/>
        <dbReference type="Rhea" id="RHEA-COMP:12673"/>
        <dbReference type="ChEBI" id="CHEBI:15378"/>
        <dbReference type="ChEBI" id="CHEBI:64719"/>
        <dbReference type="ChEBI" id="CHEBI:78442"/>
        <dbReference type="ChEBI" id="CHEBI:78494"/>
        <dbReference type="ChEBI" id="CHEBI:133044"/>
        <dbReference type="EC" id="2.3.2.6"/>
    </reaction>
</comment>
<comment type="catalytic activity">
    <reaction evidence="1">
        <text>L-phenylalanyl-tRNA(Phe) + an N-terminal L-alpha-aminoacyl-[protein] = an N-terminal L-phenylalanyl-L-alpha-aminoacyl-[protein] + tRNA(Phe)</text>
        <dbReference type="Rhea" id="RHEA:43632"/>
        <dbReference type="Rhea" id="RHEA-COMP:9668"/>
        <dbReference type="Rhea" id="RHEA-COMP:9699"/>
        <dbReference type="Rhea" id="RHEA-COMP:10636"/>
        <dbReference type="Rhea" id="RHEA-COMP:10637"/>
        <dbReference type="ChEBI" id="CHEBI:78442"/>
        <dbReference type="ChEBI" id="CHEBI:78531"/>
        <dbReference type="ChEBI" id="CHEBI:78597"/>
        <dbReference type="ChEBI" id="CHEBI:83561"/>
        <dbReference type="EC" id="2.3.2.6"/>
    </reaction>
</comment>
<comment type="subcellular location">
    <subcellularLocation>
        <location evidence="1">Cytoplasm</location>
    </subcellularLocation>
</comment>
<comment type="similarity">
    <text evidence="1">Belongs to the L/F-transferase family.</text>
</comment>
<gene>
    <name evidence="1" type="primary">aat</name>
    <name type="ordered locus">PputW619_3409</name>
</gene>
<accession>B1JBE5</accession>
<protein>
    <recommendedName>
        <fullName evidence="1">Leucyl/phenylalanyl-tRNA--protein transferase</fullName>
        <ecNumber evidence="1">2.3.2.6</ecNumber>
    </recommendedName>
    <alternativeName>
        <fullName evidence="1">L/F-transferase</fullName>
    </alternativeName>
    <alternativeName>
        <fullName evidence="1">Leucyltransferase</fullName>
    </alternativeName>
    <alternativeName>
        <fullName evidence="1">Phenyalanyltransferase</fullName>
    </alternativeName>
</protein>
<feature type="chain" id="PRO_1000131939" description="Leucyl/phenylalanyl-tRNA--protein transferase">
    <location>
        <begin position="1"/>
        <end position="226"/>
    </location>
</feature>
<evidence type="ECO:0000255" key="1">
    <source>
        <dbReference type="HAMAP-Rule" id="MF_00688"/>
    </source>
</evidence>
<keyword id="KW-0012">Acyltransferase</keyword>
<keyword id="KW-0963">Cytoplasm</keyword>
<keyword id="KW-0808">Transferase</keyword>
<organism>
    <name type="scientific">Pseudomonas putida (strain W619)</name>
    <dbReference type="NCBI Taxonomy" id="390235"/>
    <lineage>
        <taxon>Bacteria</taxon>
        <taxon>Pseudomonadati</taxon>
        <taxon>Pseudomonadota</taxon>
        <taxon>Gammaproteobacteria</taxon>
        <taxon>Pseudomonadales</taxon>
        <taxon>Pseudomonadaceae</taxon>
        <taxon>Pseudomonas</taxon>
    </lineage>
</organism>
<proteinExistence type="inferred from homology"/>
<sequence length="226" mass="25341">MLTWLTRDSLTFPPLEKALQDPNGLLAAGGDLSPERLVQAYRHGCFPWYQDGQPILWWSPDPRTVLFPNELHVSRSLAKLLRQGRYQVSFDTDFPAVIDACAAPRDYADGTWITDTMRNAYCELHRRGIAHSVEVRHNGELVGGLYGLAMGRLFFGESMFSRADNASKVGFVTLVKHLQEAGFVLIDCQMPTDHLHSLGARAISRASFADYLAHHLDQPNSASWRS</sequence>
<name>LFTR_PSEPW</name>
<reference key="1">
    <citation type="submission" date="2008-02" db="EMBL/GenBank/DDBJ databases">
        <title>Complete sequence of Pseudomonas putida W619.</title>
        <authorList>
            <person name="Copeland A."/>
            <person name="Lucas S."/>
            <person name="Lapidus A."/>
            <person name="Barry K."/>
            <person name="Detter J.C."/>
            <person name="Glavina del Rio T."/>
            <person name="Dalin E."/>
            <person name="Tice H."/>
            <person name="Pitluck S."/>
            <person name="Chain P."/>
            <person name="Malfatti S."/>
            <person name="Shin M."/>
            <person name="Vergez L."/>
            <person name="Schmutz J."/>
            <person name="Larimer F."/>
            <person name="Land M."/>
            <person name="Hauser L."/>
            <person name="Kyrpides N."/>
            <person name="Kim E."/>
            <person name="Taghavi S."/>
            <person name="Vangronsveld D."/>
            <person name="van der Lelie D."/>
            <person name="Richardson P."/>
        </authorList>
    </citation>
    <scope>NUCLEOTIDE SEQUENCE [LARGE SCALE GENOMIC DNA]</scope>
    <source>
        <strain>W619</strain>
    </source>
</reference>